<feature type="signal peptide" evidence="1">
    <location>
        <begin position="1"/>
        <end position="21"/>
    </location>
</feature>
<feature type="chain" id="PRO_0000045956" description="Protein YebF">
    <location>
        <begin position="22"/>
        <end position="118"/>
    </location>
</feature>
<feature type="domain" description="YebF/Cmi" evidence="2">
    <location>
        <begin position="31"/>
        <end position="118"/>
    </location>
</feature>
<feature type="disulfide bond" evidence="2">
    <location>
        <begin position="35"/>
        <end position="108"/>
    </location>
</feature>
<accession>Q83KS1</accession>
<accession>Q7UAF5</accession>
<keyword id="KW-1015">Disulfide bond</keyword>
<keyword id="KW-1185">Reference proteome</keyword>
<keyword id="KW-0964">Secreted</keyword>
<keyword id="KW-0732">Signal</keyword>
<comment type="subcellular location">
    <subcellularLocation>
        <location evidence="1">Secreted</location>
    </subcellularLocation>
</comment>
<comment type="similarity">
    <text evidence="1">Belongs to the YebF family.</text>
</comment>
<name>YEBF_SHIFL</name>
<dbReference type="EMBL" id="AE005674">
    <property type="protein sequence ID" value="AAN43416.2"/>
    <property type="molecule type" value="Genomic_DNA"/>
</dbReference>
<dbReference type="EMBL" id="AE014073">
    <property type="protein sequence ID" value="AAP17239.1"/>
    <property type="molecule type" value="Genomic_DNA"/>
</dbReference>
<dbReference type="RefSeq" id="NP_707709.2">
    <property type="nucleotide sequence ID" value="NC_004337.2"/>
</dbReference>
<dbReference type="RefSeq" id="WP_005047608.1">
    <property type="nucleotide sequence ID" value="NZ_WPGW01000041.1"/>
</dbReference>
<dbReference type="BMRB" id="Q83KS1"/>
<dbReference type="SMR" id="Q83KS1"/>
<dbReference type="STRING" id="198214.SF1858"/>
<dbReference type="PaxDb" id="198214-SF1858"/>
<dbReference type="GeneID" id="1025024"/>
<dbReference type="KEGG" id="sfl:SF1858"/>
<dbReference type="KEGG" id="sfx:S1923"/>
<dbReference type="PATRIC" id="fig|198214.7.peg.2212"/>
<dbReference type="HOGENOM" id="CLU_161319_1_0_6"/>
<dbReference type="Proteomes" id="UP000001006">
    <property type="component" value="Chromosome"/>
</dbReference>
<dbReference type="Proteomes" id="UP000002673">
    <property type="component" value="Chromosome"/>
</dbReference>
<dbReference type="GO" id="GO:0005576">
    <property type="term" value="C:extracellular region"/>
    <property type="evidence" value="ECO:0007669"/>
    <property type="project" value="UniProtKB-SubCell"/>
</dbReference>
<dbReference type="Gene3D" id="3.10.450.300">
    <property type="entry name" value="YebF/Colicin-M immunity protein"/>
    <property type="match status" value="1"/>
</dbReference>
<dbReference type="HAMAP" id="MF_01435">
    <property type="entry name" value="YebF"/>
    <property type="match status" value="1"/>
</dbReference>
<dbReference type="InterPro" id="IPR020236">
    <property type="entry name" value="Uncharacterised_YebF"/>
</dbReference>
<dbReference type="InterPro" id="IPR038703">
    <property type="entry name" value="YebF/Cmi_sf"/>
</dbReference>
<dbReference type="InterPro" id="IPR025603">
    <property type="entry name" value="YebF/ColM_immunity"/>
</dbReference>
<dbReference type="NCBIfam" id="NF010224">
    <property type="entry name" value="PRK13680.1"/>
    <property type="match status" value="1"/>
</dbReference>
<dbReference type="NCBIfam" id="NF041240">
    <property type="entry name" value="YebF_not_Cmi"/>
    <property type="match status" value="1"/>
</dbReference>
<dbReference type="Pfam" id="PF13995">
    <property type="entry name" value="YebF"/>
    <property type="match status" value="1"/>
</dbReference>
<dbReference type="PROSITE" id="PS51979">
    <property type="entry name" value="YEBF_CMI"/>
    <property type="match status" value="1"/>
</dbReference>
<protein>
    <recommendedName>
        <fullName evidence="1">Protein YebF</fullName>
    </recommendedName>
</protein>
<proteinExistence type="inferred from homology"/>
<evidence type="ECO:0000255" key="1">
    <source>
        <dbReference type="HAMAP-Rule" id="MF_01435"/>
    </source>
</evidence>
<evidence type="ECO:0000255" key="2">
    <source>
        <dbReference type="PROSITE-ProRule" id="PRU01323"/>
    </source>
</evidence>
<reference key="1">
    <citation type="journal article" date="2002" name="Nucleic Acids Res.">
        <title>Genome sequence of Shigella flexneri 2a: insights into pathogenicity through comparison with genomes of Escherichia coli K12 and O157.</title>
        <authorList>
            <person name="Jin Q."/>
            <person name="Yuan Z."/>
            <person name="Xu J."/>
            <person name="Wang Y."/>
            <person name="Shen Y."/>
            <person name="Lu W."/>
            <person name="Wang J."/>
            <person name="Liu H."/>
            <person name="Yang J."/>
            <person name="Yang F."/>
            <person name="Zhang X."/>
            <person name="Zhang J."/>
            <person name="Yang G."/>
            <person name="Wu H."/>
            <person name="Qu D."/>
            <person name="Dong J."/>
            <person name="Sun L."/>
            <person name="Xue Y."/>
            <person name="Zhao A."/>
            <person name="Gao Y."/>
            <person name="Zhu J."/>
            <person name="Kan B."/>
            <person name="Ding K."/>
            <person name="Chen S."/>
            <person name="Cheng H."/>
            <person name="Yao Z."/>
            <person name="He B."/>
            <person name="Chen R."/>
            <person name="Ma D."/>
            <person name="Qiang B."/>
            <person name="Wen Y."/>
            <person name="Hou Y."/>
            <person name="Yu J."/>
        </authorList>
    </citation>
    <scope>NUCLEOTIDE SEQUENCE [LARGE SCALE GENOMIC DNA]</scope>
    <source>
        <strain>301 / Serotype 2a</strain>
    </source>
</reference>
<reference key="2">
    <citation type="journal article" date="2003" name="Infect. Immun.">
        <title>Complete genome sequence and comparative genomics of Shigella flexneri serotype 2a strain 2457T.</title>
        <authorList>
            <person name="Wei J."/>
            <person name="Goldberg M.B."/>
            <person name="Burland V."/>
            <person name="Venkatesan M.M."/>
            <person name="Deng W."/>
            <person name="Fournier G."/>
            <person name="Mayhew G.F."/>
            <person name="Plunkett G. III"/>
            <person name="Rose D.J."/>
            <person name="Darling A."/>
            <person name="Mau B."/>
            <person name="Perna N.T."/>
            <person name="Payne S.M."/>
            <person name="Runyen-Janecky L.J."/>
            <person name="Zhou S."/>
            <person name="Schwartz D.C."/>
            <person name="Blattner F.R."/>
        </authorList>
    </citation>
    <scope>NUCLEOTIDE SEQUENCE [LARGE SCALE GENOMIC DNA]</scope>
    <source>
        <strain>ATCC 700930 / 2457T / Serotype 2a</strain>
    </source>
</reference>
<gene>
    <name evidence="1" type="primary">yebF</name>
    <name type="ordered locus">SF1858</name>
    <name type="ordered locus">S1923</name>
</gene>
<sequence length="118" mass="12963">MKKRGAFLGRLLVSACASVFAANNETSKSVTFPKCEGLDAAGIAASVKRDYQQNRVARWADDQKIVGQADPVAWVSLQDIQGKDDKWSVPLTVRGKSADIHYQVCVDCKAGMAEYQRR</sequence>
<organism>
    <name type="scientific">Shigella flexneri</name>
    <dbReference type="NCBI Taxonomy" id="623"/>
    <lineage>
        <taxon>Bacteria</taxon>
        <taxon>Pseudomonadati</taxon>
        <taxon>Pseudomonadota</taxon>
        <taxon>Gammaproteobacteria</taxon>
        <taxon>Enterobacterales</taxon>
        <taxon>Enterobacteriaceae</taxon>
        <taxon>Shigella</taxon>
    </lineage>
</organism>